<comment type="function">
    <text evidence="1">During stationary phase, binds the chromosome non-specifically, forming a highly ordered and stable dps-DNA co-crystal within which chromosomal DNA is condensed and protected from diverse damages. It protects DNA from oxidative damage by sequestering intracellular Fe(2+) ion and storing it in the form of Fe(3+) oxyhydroxide mineral, which can be released after reduction. One hydrogen peroxide oxidizes two Fe(2+) ions, which prevents hydroxyl radical production by the Fenton reaction. Dps also protects the cell from UV and gamma irradiation, iron and copper toxicity, thermal stress and acid and base shocks. Also shows a weak catalase activity (By similarity).</text>
</comment>
<comment type="catalytic activity">
    <reaction>
        <text>2 Fe(2+) + H2O2 + 2 H(+) = 2 Fe(3+) + 2 H2O</text>
        <dbReference type="Rhea" id="RHEA:48712"/>
        <dbReference type="ChEBI" id="CHEBI:15377"/>
        <dbReference type="ChEBI" id="CHEBI:15378"/>
        <dbReference type="ChEBI" id="CHEBI:16240"/>
        <dbReference type="ChEBI" id="CHEBI:29033"/>
        <dbReference type="ChEBI" id="CHEBI:29034"/>
    </reaction>
</comment>
<comment type="subunit">
    <text evidence="1">Homododecamer. The 12 subunits form a hollow sphere into which the mineral iron core of up to 500 Fe(3+) can be deposited (By similarity).</text>
</comment>
<comment type="subcellular location">
    <subcellularLocation>
        <location evidence="1">Cytoplasm</location>
        <location evidence="1">Nucleoid</location>
    </subcellularLocation>
</comment>
<comment type="domain">
    <text evidence="1">12 dinuclear ferroxidase centers are located at the interfaces between subunits related by 2-fold symmetry axes.</text>
</comment>
<comment type="similarity">
    <text evidence="2">Belongs to the Dps family.</text>
</comment>
<gene>
    <name type="primary">dps</name>
    <name type="ordered locus">c0898</name>
</gene>
<reference key="1">
    <citation type="journal article" date="2002" name="Proc. Natl. Acad. Sci. U.S.A.">
        <title>Extensive mosaic structure revealed by the complete genome sequence of uropathogenic Escherichia coli.</title>
        <authorList>
            <person name="Welch R.A."/>
            <person name="Burland V."/>
            <person name="Plunkett G. III"/>
            <person name="Redford P."/>
            <person name="Roesch P."/>
            <person name="Rasko D."/>
            <person name="Buckles E.L."/>
            <person name="Liou S.-R."/>
            <person name="Boutin A."/>
            <person name="Hackett J."/>
            <person name="Stroud D."/>
            <person name="Mayhew G.F."/>
            <person name="Rose D.J."/>
            <person name="Zhou S."/>
            <person name="Schwartz D.C."/>
            <person name="Perna N.T."/>
            <person name="Mobley H.L.T."/>
            <person name="Donnenberg M.S."/>
            <person name="Blattner F.R."/>
        </authorList>
    </citation>
    <scope>NUCLEOTIDE SEQUENCE [LARGE SCALE GENOMIC DNA]</scope>
    <source>
        <strain>CFT073 / ATCC 700928 / UPEC</strain>
    </source>
</reference>
<protein>
    <recommendedName>
        <fullName>DNA protection during starvation protein</fullName>
        <ecNumber>1.16.-.-</ecNumber>
    </recommendedName>
</protein>
<proteinExistence type="inferred from homology"/>
<organism>
    <name type="scientific">Escherichia coli O6:H1 (strain CFT073 / ATCC 700928 / UPEC)</name>
    <dbReference type="NCBI Taxonomy" id="199310"/>
    <lineage>
        <taxon>Bacteria</taxon>
        <taxon>Pseudomonadati</taxon>
        <taxon>Pseudomonadota</taxon>
        <taxon>Gammaproteobacteria</taxon>
        <taxon>Enterobacterales</taxon>
        <taxon>Enterobacteriaceae</taxon>
        <taxon>Escherichia</taxon>
    </lineage>
</organism>
<dbReference type="EC" id="1.16.-.-"/>
<dbReference type="EMBL" id="AE014075">
    <property type="protein sequence ID" value="AAN79371.2"/>
    <property type="molecule type" value="Genomic_DNA"/>
</dbReference>
<dbReference type="RefSeq" id="WP_000100799.1">
    <property type="nucleotide sequence ID" value="NZ_CP051263.1"/>
</dbReference>
<dbReference type="SMR" id="Q8FJM0"/>
<dbReference type="STRING" id="199310.c0898"/>
<dbReference type="KEGG" id="ecc:c0898"/>
<dbReference type="eggNOG" id="COG0783">
    <property type="taxonomic scope" value="Bacteria"/>
</dbReference>
<dbReference type="HOGENOM" id="CLU_098183_1_2_6"/>
<dbReference type="Proteomes" id="UP000001410">
    <property type="component" value="Chromosome"/>
</dbReference>
<dbReference type="GO" id="GO:0005737">
    <property type="term" value="C:cytoplasm"/>
    <property type="evidence" value="ECO:0007669"/>
    <property type="project" value="UniProtKB-UniRule"/>
</dbReference>
<dbReference type="GO" id="GO:0009295">
    <property type="term" value="C:nucleoid"/>
    <property type="evidence" value="ECO:0007669"/>
    <property type="project" value="UniProtKB-SubCell"/>
</dbReference>
<dbReference type="GO" id="GO:0003677">
    <property type="term" value="F:DNA binding"/>
    <property type="evidence" value="ECO:0007669"/>
    <property type="project" value="UniProtKB-UniRule"/>
</dbReference>
<dbReference type="GO" id="GO:0008199">
    <property type="term" value="F:ferric iron binding"/>
    <property type="evidence" value="ECO:0007669"/>
    <property type="project" value="UniProtKB-UniRule"/>
</dbReference>
<dbReference type="GO" id="GO:0016722">
    <property type="term" value="F:oxidoreductase activity, acting on metal ions"/>
    <property type="evidence" value="ECO:0007669"/>
    <property type="project" value="InterPro"/>
</dbReference>
<dbReference type="GO" id="GO:0030261">
    <property type="term" value="P:chromosome condensation"/>
    <property type="evidence" value="ECO:0007669"/>
    <property type="project" value="UniProtKB-KW"/>
</dbReference>
<dbReference type="GO" id="GO:0006879">
    <property type="term" value="P:intracellular iron ion homeostasis"/>
    <property type="evidence" value="ECO:0007669"/>
    <property type="project" value="UniProtKB-KW"/>
</dbReference>
<dbReference type="CDD" id="cd01043">
    <property type="entry name" value="DPS"/>
    <property type="match status" value="1"/>
</dbReference>
<dbReference type="FunFam" id="1.20.1260.10:FF:000003">
    <property type="entry name" value="DNA protection during starvation protein"/>
    <property type="match status" value="1"/>
</dbReference>
<dbReference type="Gene3D" id="1.20.1260.10">
    <property type="match status" value="1"/>
</dbReference>
<dbReference type="HAMAP" id="MF_01441">
    <property type="entry name" value="Dps"/>
    <property type="match status" value="1"/>
</dbReference>
<dbReference type="InterPro" id="IPR002177">
    <property type="entry name" value="DPS_DNA-bd"/>
</dbReference>
<dbReference type="InterPro" id="IPR023188">
    <property type="entry name" value="DPS_DNA-bd_CS"/>
</dbReference>
<dbReference type="InterPro" id="IPR023067">
    <property type="entry name" value="Dps_gammaproteobac"/>
</dbReference>
<dbReference type="InterPro" id="IPR012347">
    <property type="entry name" value="Ferritin-like"/>
</dbReference>
<dbReference type="InterPro" id="IPR009078">
    <property type="entry name" value="Ferritin-like_SF"/>
</dbReference>
<dbReference type="InterPro" id="IPR008331">
    <property type="entry name" value="Ferritin_DPS_dom"/>
</dbReference>
<dbReference type="NCBIfam" id="NF006975">
    <property type="entry name" value="PRK09448.1"/>
    <property type="match status" value="1"/>
</dbReference>
<dbReference type="PANTHER" id="PTHR42932:SF3">
    <property type="entry name" value="DNA PROTECTION DURING STARVATION PROTEIN"/>
    <property type="match status" value="1"/>
</dbReference>
<dbReference type="PANTHER" id="PTHR42932">
    <property type="entry name" value="GENERAL STRESS PROTEIN 20U"/>
    <property type="match status" value="1"/>
</dbReference>
<dbReference type="Pfam" id="PF00210">
    <property type="entry name" value="Ferritin"/>
    <property type="match status" value="1"/>
</dbReference>
<dbReference type="PIRSF" id="PIRSF005900">
    <property type="entry name" value="Dps"/>
    <property type="match status" value="1"/>
</dbReference>
<dbReference type="PRINTS" id="PR01346">
    <property type="entry name" value="HELNAPAPROT"/>
</dbReference>
<dbReference type="SUPFAM" id="SSF47240">
    <property type="entry name" value="Ferritin-like"/>
    <property type="match status" value="1"/>
</dbReference>
<dbReference type="PROSITE" id="PS00818">
    <property type="entry name" value="DPS_1"/>
    <property type="match status" value="1"/>
</dbReference>
<dbReference type="PROSITE" id="PS00819">
    <property type="entry name" value="DPS_2"/>
    <property type="match status" value="1"/>
</dbReference>
<name>DPS_ECOL6</name>
<keyword id="KW-0963">Cytoplasm</keyword>
<keyword id="KW-0226">DNA condensation</keyword>
<keyword id="KW-0238">DNA-binding</keyword>
<keyword id="KW-0408">Iron</keyword>
<keyword id="KW-0409">Iron storage</keyword>
<keyword id="KW-0479">Metal-binding</keyword>
<keyword id="KW-0560">Oxidoreductase</keyword>
<keyword id="KW-1185">Reference proteome</keyword>
<sequence>MSTAKLVKSKATNLLYTRNDVSDSEKKATVELLNRQVIQFIDLSLITKQAHWNMRGANFIAVHEMLDGFRTALIDHLDTMAERAVQLGGVALGTTQVINSKTPLKSYPLDIHNVQDHLKELADRYAIVANDVRKAIDEAKDDDTADILTAASRDLDKFLWFIESNIE</sequence>
<accession>Q8FJM0</accession>
<feature type="initiator methionine" description="Removed" evidence="1">
    <location>
        <position position="1"/>
    </location>
</feature>
<feature type="chain" id="PRO_0000253331" description="DNA protection during starvation protein">
    <location>
        <begin position="2"/>
        <end position="167"/>
    </location>
</feature>
<feature type="binding site" evidence="1">
    <location>
        <position position="51"/>
    </location>
    <ligand>
        <name>Fe cation</name>
        <dbReference type="ChEBI" id="CHEBI:24875"/>
        <label>1</label>
        <note>ligand shared between two dodecameric partners</note>
    </ligand>
</feature>
<feature type="binding site" description="in other chain" evidence="1">
    <location>
        <position position="78"/>
    </location>
    <ligand>
        <name>Fe cation</name>
        <dbReference type="ChEBI" id="CHEBI:24875"/>
        <label>1</label>
        <note>ligand shared between two dodecameric partners</note>
    </ligand>
</feature>
<feature type="binding site" description="in other chain" evidence="1">
    <location>
        <position position="82"/>
    </location>
    <ligand>
        <name>Fe cation</name>
        <dbReference type="ChEBI" id="CHEBI:24875"/>
        <label>1</label>
        <note>ligand shared between two dodecameric partners</note>
    </ligand>
</feature>
<feature type="binding site" evidence="1">
    <location>
        <position position="82"/>
    </location>
    <ligand>
        <name>Fe cation</name>
        <dbReference type="ChEBI" id="CHEBI:24875"/>
        <label>2</label>
    </ligand>
</feature>
<evidence type="ECO:0000250" key="1"/>
<evidence type="ECO:0000305" key="2"/>